<gene>
    <name evidence="1" type="primary">anmK</name>
    <name type="ordered locus">BCAH820_2482</name>
</gene>
<keyword id="KW-0067">ATP-binding</keyword>
<keyword id="KW-0119">Carbohydrate metabolism</keyword>
<keyword id="KW-0418">Kinase</keyword>
<keyword id="KW-0547">Nucleotide-binding</keyword>
<keyword id="KW-0808">Transferase</keyword>
<sequence>MYIAGVMSGTSLDGIDVALVRIEGSGVESKVELIHFTTVPFCNDIKSEIQQALSIENSNVQLICSLNFKLGLCFANAVKEVCKEANFSLEQLDLIGSHGQTIYHQPKQDGNRIPSTLQIGEPAVIAYETNTTVISNFRTMDMAAGGQGAPLVPYSEVILYRDPSKNRLLQNIGGISNVTVIPNQQSDQNVIAFDTGPGNMIIDEVCQRLFQLSYDQNGEIAKQGRVVDEILTYCMSHPFLKMNPPKSTGREQFGEKFASELLKRFEKHSKENILTTVTMFTANSIVHHYKKFILPYYEIDEVILGGGGSYNSTLVEMLRNGLKDENCAIFIQEDIGYSSEAKEAIAFAILANETHHCNPSNVPSATGAKQSVVLGNITFPPV</sequence>
<evidence type="ECO:0000255" key="1">
    <source>
        <dbReference type="HAMAP-Rule" id="MF_01270"/>
    </source>
</evidence>
<comment type="function">
    <text evidence="1">Catalyzes the specific phosphorylation of 1,6-anhydro-N-acetylmuramic acid (anhMurNAc) with the simultaneous cleavage of the 1,6-anhydro ring, generating MurNAc-6-P. Is required for the utilization of anhMurNAc either imported from the medium or derived from its own cell wall murein, and thus plays a role in cell wall recycling.</text>
</comment>
<comment type="catalytic activity">
    <reaction evidence="1">
        <text>1,6-anhydro-N-acetyl-beta-muramate + ATP + H2O = N-acetyl-D-muramate 6-phosphate + ADP + H(+)</text>
        <dbReference type="Rhea" id="RHEA:24952"/>
        <dbReference type="ChEBI" id="CHEBI:15377"/>
        <dbReference type="ChEBI" id="CHEBI:15378"/>
        <dbReference type="ChEBI" id="CHEBI:30616"/>
        <dbReference type="ChEBI" id="CHEBI:58690"/>
        <dbReference type="ChEBI" id="CHEBI:58722"/>
        <dbReference type="ChEBI" id="CHEBI:456216"/>
        <dbReference type="EC" id="2.7.1.170"/>
    </reaction>
</comment>
<comment type="pathway">
    <text evidence="1">Amino-sugar metabolism; 1,6-anhydro-N-acetylmuramate degradation.</text>
</comment>
<comment type="pathway">
    <text evidence="1">Cell wall biogenesis; peptidoglycan recycling.</text>
</comment>
<comment type="similarity">
    <text evidence="1">Belongs to the anhydro-N-acetylmuramic acid kinase family.</text>
</comment>
<name>ANMK_BACC0</name>
<organism>
    <name type="scientific">Bacillus cereus (strain AH820)</name>
    <dbReference type="NCBI Taxonomy" id="405535"/>
    <lineage>
        <taxon>Bacteria</taxon>
        <taxon>Bacillati</taxon>
        <taxon>Bacillota</taxon>
        <taxon>Bacilli</taxon>
        <taxon>Bacillales</taxon>
        <taxon>Bacillaceae</taxon>
        <taxon>Bacillus</taxon>
        <taxon>Bacillus cereus group</taxon>
    </lineage>
</organism>
<dbReference type="EC" id="2.7.1.170" evidence="1"/>
<dbReference type="EMBL" id="CP001283">
    <property type="protein sequence ID" value="ACK87309.1"/>
    <property type="molecule type" value="Genomic_DNA"/>
</dbReference>
<dbReference type="RefSeq" id="WP_000274996.1">
    <property type="nucleotide sequence ID" value="NC_011773.1"/>
</dbReference>
<dbReference type="SMR" id="B7JNT4"/>
<dbReference type="KEGG" id="bcu:BCAH820_2482"/>
<dbReference type="HOGENOM" id="CLU_038782_1_0_9"/>
<dbReference type="UniPathway" id="UPA00343"/>
<dbReference type="UniPathway" id="UPA00544"/>
<dbReference type="Proteomes" id="UP000001363">
    <property type="component" value="Chromosome"/>
</dbReference>
<dbReference type="GO" id="GO:0005524">
    <property type="term" value="F:ATP binding"/>
    <property type="evidence" value="ECO:0007669"/>
    <property type="project" value="UniProtKB-UniRule"/>
</dbReference>
<dbReference type="GO" id="GO:0016301">
    <property type="term" value="F:kinase activity"/>
    <property type="evidence" value="ECO:0007669"/>
    <property type="project" value="UniProtKB-KW"/>
</dbReference>
<dbReference type="GO" id="GO:0016773">
    <property type="term" value="F:phosphotransferase activity, alcohol group as acceptor"/>
    <property type="evidence" value="ECO:0007669"/>
    <property type="project" value="UniProtKB-UniRule"/>
</dbReference>
<dbReference type="GO" id="GO:0097175">
    <property type="term" value="P:1,6-anhydro-N-acetyl-beta-muramic acid catabolic process"/>
    <property type="evidence" value="ECO:0007669"/>
    <property type="project" value="UniProtKB-UniRule"/>
</dbReference>
<dbReference type="GO" id="GO:0006040">
    <property type="term" value="P:amino sugar metabolic process"/>
    <property type="evidence" value="ECO:0007669"/>
    <property type="project" value="InterPro"/>
</dbReference>
<dbReference type="GO" id="GO:0009254">
    <property type="term" value="P:peptidoglycan turnover"/>
    <property type="evidence" value="ECO:0007669"/>
    <property type="project" value="UniProtKB-UniRule"/>
</dbReference>
<dbReference type="CDD" id="cd24050">
    <property type="entry name" value="ASKHA_NBD_ANMK"/>
    <property type="match status" value="1"/>
</dbReference>
<dbReference type="Gene3D" id="3.30.420.40">
    <property type="match status" value="2"/>
</dbReference>
<dbReference type="HAMAP" id="MF_01270">
    <property type="entry name" value="AnhMurNAc_kinase"/>
    <property type="match status" value="1"/>
</dbReference>
<dbReference type="InterPro" id="IPR005338">
    <property type="entry name" value="Anhydro_N_Ac-Mur_kinase"/>
</dbReference>
<dbReference type="InterPro" id="IPR043129">
    <property type="entry name" value="ATPase_NBD"/>
</dbReference>
<dbReference type="NCBIfam" id="NF007142">
    <property type="entry name" value="PRK09585.2-1"/>
    <property type="match status" value="1"/>
</dbReference>
<dbReference type="NCBIfam" id="NF007148">
    <property type="entry name" value="PRK09585.3-2"/>
    <property type="match status" value="1"/>
</dbReference>
<dbReference type="PANTHER" id="PTHR30605">
    <property type="entry name" value="ANHYDRO-N-ACETYLMURAMIC ACID KINASE"/>
    <property type="match status" value="1"/>
</dbReference>
<dbReference type="PANTHER" id="PTHR30605:SF0">
    <property type="entry name" value="ANHYDRO-N-ACETYLMURAMIC ACID KINASE"/>
    <property type="match status" value="1"/>
</dbReference>
<dbReference type="Pfam" id="PF03702">
    <property type="entry name" value="AnmK"/>
    <property type="match status" value="1"/>
</dbReference>
<dbReference type="SUPFAM" id="SSF53067">
    <property type="entry name" value="Actin-like ATPase domain"/>
    <property type="match status" value="1"/>
</dbReference>
<proteinExistence type="inferred from homology"/>
<feature type="chain" id="PRO_1000214154" description="Anhydro-N-acetylmuramic acid kinase">
    <location>
        <begin position="1"/>
        <end position="382"/>
    </location>
</feature>
<feature type="binding site" evidence="1">
    <location>
        <begin position="9"/>
        <end position="16"/>
    </location>
    <ligand>
        <name>ATP</name>
        <dbReference type="ChEBI" id="CHEBI:30616"/>
    </ligand>
</feature>
<reference key="1">
    <citation type="submission" date="2008-10" db="EMBL/GenBank/DDBJ databases">
        <title>Genome sequence of Bacillus cereus AH820.</title>
        <authorList>
            <person name="Dodson R.J."/>
            <person name="Durkin A.S."/>
            <person name="Rosovitz M.J."/>
            <person name="Rasko D.A."/>
            <person name="Hoffmaster A."/>
            <person name="Ravel J."/>
            <person name="Sutton G."/>
        </authorList>
    </citation>
    <scope>NUCLEOTIDE SEQUENCE [LARGE SCALE GENOMIC DNA]</scope>
    <source>
        <strain>AH820</strain>
    </source>
</reference>
<protein>
    <recommendedName>
        <fullName evidence="1">Anhydro-N-acetylmuramic acid kinase</fullName>
        <ecNumber evidence="1">2.7.1.170</ecNumber>
    </recommendedName>
    <alternativeName>
        <fullName evidence="1">AnhMurNAc kinase</fullName>
    </alternativeName>
</protein>
<accession>B7JNT4</accession>